<keyword id="KW-0113">Calvin cycle</keyword>
<keyword id="KW-0120">Carbon dioxide fixation</keyword>
<keyword id="KW-0150">Chloroplast</keyword>
<keyword id="KW-1015">Disulfide bond</keyword>
<keyword id="KW-0456">Lyase</keyword>
<keyword id="KW-0460">Magnesium</keyword>
<keyword id="KW-0479">Metal-binding</keyword>
<keyword id="KW-0488">Methylation</keyword>
<keyword id="KW-0503">Monooxygenase</keyword>
<keyword id="KW-0560">Oxidoreductase</keyword>
<keyword id="KW-0601">Photorespiration</keyword>
<keyword id="KW-0602">Photosynthesis</keyword>
<keyword id="KW-0934">Plastid</keyword>
<dbReference type="EC" id="4.1.1.39" evidence="1"/>
<dbReference type="EMBL" id="L14692">
    <property type="protein sequence ID" value="AAA84033.2"/>
    <property type="molecule type" value="Genomic_DNA"/>
</dbReference>
<dbReference type="GO" id="GO:0009507">
    <property type="term" value="C:chloroplast"/>
    <property type="evidence" value="ECO:0007669"/>
    <property type="project" value="UniProtKB-SubCell"/>
</dbReference>
<dbReference type="GO" id="GO:0000287">
    <property type="term" value="F:magnesium ion binding"/>
    <property type="evidence" value="ECO:0007669"/>
    <property type="project" value="InterPro"/>
</dbReference>
<dbReference type="GO" id="GO:0004497">
    <property type="term" value="F:monooxygenase activity"/>
    <property type="evidence" value="ECO:0007669"/>
    <property type="project" value="UniProtKB-KW"/>
</dbReference>
<dbReference type="GO" id="GO:0016984">
    <property type="term" value="F:ribulose-bisphosphate carboxylase activity"/>
    <property type="evidence" value="ECO:0007669"/>
    <property type="project" value="UniProtKB-EC"/>
</dbReference>
<dbReference type="GO" id="GO:0009853">
    <property type="term" value="P:photorespiration"/>
    <property type="evidence" value="ECO:0007669"/>
    <property type="project" value="UniProtKB-KW"/>
</dbReference>
<dbReference type="GO" id="GO:0019253">
    <property type="term" value="P:reductive pentose-phosphate cycle"/>
    <property type="evidence" value="ECO:0007669"/>
    <property type="project" value="UniProtKB-KW"/>
</dbReference>
<dbReference type="CDD" id="cd08212">
    <property type="entry name" value="RuBisCO_large_I"/>
    <property type="match status" value="1"/>
</dbReference>
<dbReference type="FunFam" id="3.20.20.110:FF:000001">
    <property type="entry name" value="Ribulose bisphosphate carboxylase large chain"/>
    <property type="match status" value="1"/>
</dbReference>
<dbReference type="FunFam" id="3.30.70.150:FF:000001">
    <property type="entry name" value="Ribulose bisphosphate carboxylase large chain"/>
    <property type="match status" value="1"/>
</dbReference>
<dbReference type="Gene3D" id="3.20.20.110">
    <property type="entry name" value="Ribulose bisphosphate carboxylase, large subunit, C-terminal domain"/>
    <property type="match status" value="1"/>
</dbReference>
<dbReference type="Gene3D" id="3.30.70.150">
    <property type="entry name" value="RuBisCO large subunit, N-terminal domain"/>
    <property type="match status" value="1"/>
</dbReference>
<dbReference type="HAMAP" id="MF_01338">
    <property type="entry name" value="RuBisCO_L_type1"/>
    <property type="match status" value="1"/>
</dbReference>
<dbReference type="InterPro" id="IPR033966">
    <property type="entry name" value="RuBisCO"/>
</dbReference>
<dbReference type="InterPro" id="IPR020878">
    <property type="entry name" value="RuBisCo_large_chain_AS"/>
</dbReference>
<dbReference type="InterPro" id="IPR000685">
    <property type="entry name" value="RuBisCO_lsu_C"/>
</dbReference>
<dbReference type="InterPro" id="IPR036376">
    <property type="entry name" value="RuBisCO_lsu_C_sf"/>
</dbReference>
<dbReference type="InterPro" id="IPR017443">
    <property type="entry name" value="RuBisCO_lsu_fd_N"/>
</dbReference>
<dbReference type="InterPro" id="IPR036422">
    <property type="entry name" value="RuBisCO_lsu_N_sf"/>
</dbReference>
<dbReference type="InterPro" id="IPR020888">
    <property type="entry name" value="RuBisCO_lsuI"/>
</dbReference>
<dbReference type="NCBIfam" id="NF003252">
    <property type="entry name" value="PRK04208.1"/>
    <property type="match status" value="1"/>
</dbReference>
<dbReference type="PANTHER" id="PTHR42704">
    <property type="entry name" value="RIBULOSE BISPHOSPHATE CARBOXYLASE"/>
    <property type="match status" value="1"/>
</dbReference>
<dbReference type="PANTHER" id="PTHR42704:SF15">
    <property type="entry name" value="RIBULOSE BISPHOSPHATE CARBOXYLASE LARGE CHAIN"/>
    <property type="match status" value="1"/>
</dbReference>
<dbReference type="Pfam" id="PF00016">
    <property type="entry name" value="RuBisCO_large"/>
    <property type="match status" value="1"/>
</dbReference>
<dbReference type="Pfam" id="PF02788">
    <property type="entry name" value="RuBisCO_large_N"/>
    <property type="match status" value="1"/>
</dbReference>
<dbReference type="SFLD" id="SFLDG01052">
    <property type="entry name" value="RuBisCO"/>
    <property type="match status" value="1"/>
</dbReference>
<dbReference type="SFLD" id="SFLDS00014">
    <property type="entry name" value="RuBisCO"/>
    <property type="match status" value="1"/>
</dbReference>
<dbReference type="SFLD" id="SFLDG00301">
    <property type="entry name" value="RuBisCO-like_proteins"/>
    <property type="match status" value="1"/>
</dbReference>
<dbReference type="SUPFAM" id="SSF51649">
    <property type="entry name" value="RuBisCo, C-terminal domain"/>
    <property type="match status" value="1"/>
</dbReference>
<dbReference type="SUPFAM" id="SSF54966">
    <property type="entry name" value="RuBisCO, large subunit, small (N-terminal) domain"/>
    <property type="match status" value="1"/>
</dbReference>
<dbReference type="PROSITE" id="PS00157">
    <property type="entry name" value="RUBISCO_LARGE"/>
    <property type="match status" value="1"/>
</dbReference>
<protein>
    <recommendedName>
        <fullName evidence="1">Ribulose bisphosphate carboxylase large chain</fullName>
        <shortName evidence="1">RuBisCO large subunit</shortName>
        <ecNumber evidence="1">4.1.1.39</ecNumber>
    </recommendedName>
</protein>
<geneLocation type="chloroplast"/>
<gene>
    <name evidence="1" type="primary">rbcL</name>
</gene>
<evidence type="ECO:0000255" key="1">
    <source>
        <dbReference type="HAMAP-Rule" id="MF_01338"/>
    </source>
</evidence>
<comment type="function">
    <text evidence="1">RuBisCO catalyzes two reactions: the carboxylation of D-ribulose 1,5-bisphosphate, the primary event in carbon dioxide fixation, as well as the oxidative fragmentation of the pentose substrate in the photorespiration process. Both reactions occur simultaneously and in competition at the same active site.</text>
</comment>
<comment type="catalytic activity">
    <reaction evidence="1">
        <text>2 (2R)-3-phosphoglycerate + 2 H(+) = D-ribulose 1,5-bisphosphate + CO2 + H2O</text>
        <dbReference type="Rhea" id="RHEA:23124"/>
        <dbReference type="ChEBI" id="CHEBI:15377"/>
        <dbReference type="ChEBI" id="CHEBI:15378"/>
        <dbReference type="ChEBI" id="CHEBI:16526"/>
        <dbReference type="ChEBI" id="CHEBI:57870"/>
        <dbReference type="ChEBI" id="CHEBI:58272"/>
        <dbReference type="EC" id="4.1.1.39"/>
    </reaction>
</comment>
<comment type="catalytic activity">
    <reaction evidence="1">
        <text>D-ribulose 1,5-bisphosphate + O2 = 2-phosphoglycolate + (2R)-3-phosphoglycerate + 2 H(+)</text>
        <dbReference type="Rhea" id="RHEA:36631"/>
        <dbReference type="ChEBI" id="CHEBI:15378"/>
        <dbReference type="ChEBI" id="CHEBI:15379"/>
        <dbReference type="ChEBI" id="CHEBI:57870"/>
        <dbReference type="ChEBI" id="CHEBI:58033"/>
        <dbReference type="ChEBI" id="CHEBI:58272"/>
    </reaction>
</comment>
<comment type="cofactor">
    <cofactor evidence="1">
        <name>Mg(2+)</name>
        <dbReference type="ChEBI" id="CHEBI:18420"/>
    </cofactor>
    <text evidence="1">Binds 1 Mg(2+) ion per subunit.</text>
</comment>
<comment type="subunit">
    <text evidence="1">Heterohexadecamer of 8 large chains and 8 small chains; disulfide-linked. The disulfide link is formed within the large subunit homodimers.</text>
</comment>
<comment type="subcellular location">
    <subcellularLocation>
        <location>Plastid</location>
        <location>Chloroplast</location>
    </subcellularLocation>
</comment>
<comment type="PTM">
    <text evidence="1">The disulfide bond which can form in the large chain dimeric partners within the hexadecamer appears to be associated with oxidative stress and protein turnover.</text>
</comment>
<comment type="miscellaneous">
    <text evidence="1">The basic functional RuBisCO is composed of a large chain homodimer in a 'head-to-tail' conformation. In form I RuBisCO this homodimer is arranged in a barrel-like tetramer with the small subunits forming a tetrameric 'cap' on each end of the 'barrel'.</text>
</comment>
<comment type="similarity">
    <text evidence="1">Belongs to the RuBisCO large chain family. Type I subfamily.</text>
</comment>
<name>RBL_AVECA</name>
<feature type="chain" id="PRO_0000062367" description="Ribulose bisphosphate carboxylase large chain">
    <location>
        <begin position="1" status="less than"/>
        <end position="466"/>
    </location>
</feature>
<feature type="active site" description="Proton acceptor" evidence="1">
    <location>
        <position position="166"/>
    </location>
</feature>
<feature type="active site" description="Proton acceptor" evidence="1">
    <location>
        <position position="285"/>
    </location>
</feature>
<feature type="binding site" description="in homodimeric partner" evidence="1">
    <location>
        <position position="114"/>
    </location>
    <ligand>
        <name>substrate</name>
    </ligand>
</feature>
<feature type="binding site" evidence="1">
    <location>
        <position position="164"/>
    </location>
    <ligand>
        <name>substrate</name>
    </ligand>
</feature>
<feature type="binding site" evidence="1">
    <location>
        <position position="168"/>
    </location>
    <ligand>
        <name>substrate</name>
    </ligand>
</feature>
<feature type="binding site" description="via carbamate group" evidence="1">
    <location>
        <position position="192"/>
    </location>
    <ligand>
        <name>Mg(2+)</name>
        <dbReference type="ChEBI" id="CHEBI:18420"/>
    </ligand>
</feature>
<feature type="binding site" evidence="1">
    <location>
        <position position="194"/>
    </location>
    <ligand>
        <name>Mg(2+)</name>
        <dbReference type="ChEBI" id="CHEBI:18420"/>
    </ligand>
</feature>
<feature type="binding site" evidence="1">
    <location>
        <position position="195"/>
    </location>
    <ligand>
        <name>Mg(2+)</name>
        <dbReference type="ChEBI" id="CHEBI:18420"/>
    </ligand>
</feature>
<feature type="binding site" evidence="1">
    <location>
        <position position="286"/>
    </location>
    <ligand>
        <name>substrate</name>
    </ligand>
</feature>
<feature type="binding site" evidence="1">
    <location>
        <position position="318"/>
    </location>
    <ligand>
        <name>substrate</name>
    </ligand>
</feature>
<feature type="binding site" evidence="1">
    <location>
        <position position="370"/>
    </location>
    <ligand>
        <name>substrate</name>
    </ligand>
</feature>
<feature type="site" description="Transition state stabilizer" evidence="1">
    <location>
        <position position="325"/>
    </location>
</feature>
<feature type="modified residue" description="N6,N6,N6-trimethyllysine" evidence="1">
    <location>
        <position position="5"/>
    </location>
</feature>
<feature type="modified residue" description="N6-carboxylysine" evidence="1">
    <location>
        <position position="192"/>
    </location>
</feature>
<feature type="disulfide bond" description="Interchain; in linked form" evidence="1">
    <location>
        <position position="238"/>
    </location>
</feature>
<feature type="non-terminal residue">
    <location>
        <position position="1"/>
    </location>
</feature>
<sequence>SVGFKAGVKDYKLTYYTPDYETKDTDILAAFRVTPQPGVPPEEAGAAVAAESSTGTWTTVWTXXXTSLDRYKGRCYHIEPVAGEENQYIAYVAXXLDLFEEGSVTNMFTSIVGNVFGFKALRALRLEDLRIPPDYVKTFQGPPHGIQVERDKLNKYGRPLLGCTIKPKLGLSAKNYGRAVYECLRGGLDFTKDDENVNSQPFMRWRDRFLFCAEAIYKAQAETGEIKGHYLNATAGTCEEMIKRAVFARELGVPIVMHDYLTGGFTANTSLAHYCRDNGLLLHIHRAMHAVIDRQKNHGIHFRVLAKALRMSGGDHIHSGTVVGKLEGEREITLGFVDLLRDDFIEKDRSRGIYFTQDWVSLPGVLPVASGGIHVWHMPALTEIFGDDSVLQFGGGTLGHPWGNAPGXVANRVALEACVQARNEGRDLAREGNEIIRKACKWSPELAAACEVWKEIKFEFEAMDTL</sequence>
<accession>Q9MTE7</accession>
<reference key="1">
    <citation type="journal article" date="1993" name="Ann. Mo. Bot. Gard.">
        <title>Phylogenetic relationships of the Geraniaceae and Geraniales from rbcL sequence comparisons.</title>
        <authorList>
            <person name="Price R.A."/>
            <person name="Palmer J.D."/>
        </authorList>
        <dbReference type="AGRICOLA" id="IND93053813"/>
    </citation>
    <scope>NUCLEOTIDE SEQUENCE [GENOMIC DNA]</scope>
</reference>
<organism>
    <name type="scientific">Averrhoa carambola</name>
    <name type="common">Star fruit</name>
    <dbReference type="NCBI Taxonomy" id="28974"/>
    <lineage>
        <taxon>Eukaryota</taxon>
        <taxon>Viridiplantae</taxon>
        <taxon>Streptophyta</taxon>
        <taxon>Embryophyta</taxon>
        <taxon>Tracheophyta</taxon>
        <taxon>Spermatophyta</taxon>
        <taxon>Magnoliopsida</taxon>
        <taxon>eudicotyledons</taxon>
        <taxon>Gunneridae</taxon>
        <taxon>Pentapetalae</taxon>
        <taxon>rosids</taxon>
        <taxon>fabids</taxon>
        <taxon>Oxalidales</taxon>
        <taxon>Oxalidaceae</taxon>
        <taxon>Averrhoa</taxon>
    </lineage>
</organism>
<proteinExistence type="inferred from homology"/>